<keyword id="KW-0002">3D-structure</keyword>
<keyword id="KW-0010">Activator</keyword>
<keyword id="KW-1005">Bacterial flagellum biogenesis</keyword>
<keyword id="KW-0963">Cytoplasm</keyword>
<keyword id="KW-1015">Disulfide bond</keyword>
<keyword id="KW-0238">DNA-binding</keyword>
<keyword id="KW-1185">Reference proteome</keyword>
<keyword id="KW-0804">Transcription</keyword>
<keyword id="KW-0805">Transcription regulation</keyword>
<protein>
    <recommendedName>
        <fullName evidence="1">Flagellar transcriptional regulator FlhD</fullName>
    </recommendedName>
</protein>
<proteinExistence type="evidence at protein level"/>
<comment type="function">
    <text evidence="1">Functions in complex with FlhC as a master transcriptional regulator that regulates transcription of several flagellar and non-flagellar operons by binding to their promoter region. Activates expression of class 2 flagellar genes, including fliA, which is a flagellum-specific sigma factor that turns on the class 3 genes. Also regulates genes whose products function in a variety of physiological pathways.</text>
</comment>
<comment type="subunit">
    <text evidence="1">Homodimer; disulfide-linked. Forms a heterohexamer composed of two FlhC and four FlhD subunits. Each FlhC binds a FlhD dimer, forming a heterotrimer, and a hexamer assembles by dimerization of two heterotrimers.</text>
</comment>
<comment type="subcellular location">
    <subcellularLocation>
        <location evidence="1">Cytoplasm</location>
    </subcellularLocation>
</comment>
<comment type="domain">
    <text evidence="1">The C-terminal region contains a putative helix-turn-helix (HTH) motif, suggesting that this region may bind DNA.</text>
</comment>
<comment type="similarity">
    <text evidence="1">Belongs to the FlhD family.</text>
</comment>
<feature type="chain" id="PRO_1000045885" description="Flagellar transcriptional regulator FlhD">
    <location>
        <begin position="1"/>
        <end position="105"/>
    </location>
</feature>
<feature type="disulfide bond" description="Interchain" evidence="1">
    <location>
        <position position="65"/>
    </location>
</feature>
<name>FLHD_CUPNH</name>
<dbReference type="EMBL" id="AM260480">
    <property type="protein sequence ID" value="CAJ95036.1"/>
    <property type="molecule type" value="Genomic_DNA"/>
</dbReference>
<dbReference type="RefSeq" id="WP_010812713.1">
    <property type="nucleotide sequence ID" value="NZ_CP039288.1"/>
</dbReference>
<dbReference type="PDB" id="8J56">
    <property type="method" value="X-ray"/>
    <property type="resolution" value="3.50 A"/>
    <property type="chains" value="A/B/D/E=1-105"/>
</dbReference>
<dbReference type="PDBsum" id="8J56"/>
<dbReference type="SMR" id="Q0K4N8"/>
<dbReference type="STRING" id="381666.H16_B0235"/>
<dbReference type="GeneID" id="34305896"/>
<dbReference type="KEGG" id="reh:H16_B0235"/>
<dbReference type="eggNOG" id="ENOG5031P80">
    <property type="taxonomic scope" value="Bacteria"/>
</dbReference>
<dbReference type="HOGENOM" id="CLU_144160_1_0_4"/>
<dbReference type="OrthoDB" id="5298036at2"/>
<dbReference type="Proteomes" id="UP000008210">
    <property type="component" value="Chromosome 2"/>
</dbReference>
<dbReference type="GO" id="GO:0005737">
    <property type="term" value="C:cytoplasm"/>
    <property type="evidence" value="ECO:0007669"/>
    <property type="project" value="UniProtKB-SubCell"/>
</dbReference>
<dbReference type="GO" id="GO:0003677">
    <property type="term" value="F:DNA binding"/>
    <property type="evidence" value="ECO:0007669"/>
    <property type="project" value="UniProtKB-UniRule"/>
</dbReference>
<dbReference type="GO" id="GO:0044780">
    <property type="term" value="P:bacterial-type flagellum assembly"/>
    <property type="evidence" value="ECO:0007669"/>
    <property type="project" value="InterPro"/>
</dbReference>
<dbReference type="GO" id="GO:0045893">
    <property type="term" value="P:positive regulation of DNA-templated transcription"/>
    <property type="evidence" value="ECO:0007669"/>
    <property type="project" value="InterPro"/>
</dbReference>
<dbReference type="GO" id="GO:1902208">
    <property type="term" value="P:regulation of bacterial-type flagellum assembly"/>
    <property type="evidence" value="ECO:0007669"/>
    <property type="project" value="UniProtKB-UniRule"/>
</dbReference>
<dbReference type="Gene3D" id="1.10.4000.10">
    <property type="entry name" value="Flagellar transcriptional activator FlhD"/>
    <property type="match status" value="1"/>
</dbReference>
<dbReference type="HAMAP" id="MF_00725">
    <property type="entry name" value="FlhD"/>
    <property type="match status" value="1"/>
</dbReference>
<dbReference type="InterPro" id="IPR023559">
    <property type="entry name" value="Flagellar_FlhD"/>
</dbReference>
<dbReference type="InterPro" id="IPR036194">
    <property type="entry name" value="FlhD_sf"/>
</dbReference>
<dbReference type="NCBIfam" id="NF002783">
    <property type="entry name" value="PRK02909.1-1"/>
    <property type="match status" value="1"/>
</dbReference>
<dbReference type="Pfam" id="PF05247">
    <property type="entry name" value="FlhD"/>
    <property type="match status" value="1"/>
</dbReference>
<dbReference type="SUPFAM" id="SSF63592">
    <property type="entry name" value="Flagellar transcriptional activator FlhD"/>
    <property type="match status" value="1"/>
</dbReference>
<evidence type="ECO:0000255" key="1">
    <source>
        <dbReference type="HAMAP-Rule" id="MF_00725"/>
    </source>
</evidence>
<sequence length="105" mass="11827">MESSEVLQEIREVNLAYLLLAQRLVRENQVEAMFRLGVSKEIADILAKLTSAQLVKLAASNMVLCRFRFDDHALLSTLTHTAKSHDMQQIHAAILLARQPVESLN</sequence>
<gene>
    <name evidence="1" type="primary">flhD</name>
    <name type="ordered locus">H16_B0235</name>
</gene>
<reference key="1">
    <citation type="journal article" date="2006" name="Nat. Biotechnol.">
        <title>Genome sequence of the bioplastic-producing 'Knallgas' bacterium Ralstonia eutropha H16.</title>
        <authorList>
            <person name="Pohlmann A."/>
            <person name="Fricke W.F."/>
            <person name="Reinecke F."/>
            <person name="Kusian B."/>
            <person name="Liesegang H."/>
            <person name="Cramm R."/>
            <person name="Eitinger T."/>
            <person name="Ewering C."/>
            <person name="Poetter M."/>
            <person name="Schwartz E."/>
            <person name="Strittmatter A."/>
            <person name="Voss I."/>
            <person name="Gottschalk G."/>
            <person name="Steinbuechel A."/>
            <person name="Friedrich B."/>
            <person name="Bowien B."/>
        </authorList>
    </citation>
    <scope>NUCLEOTIDE SEQUENCE [LARGE SCALE GENOMIC DNA]</scope>
    <source>
        <strain>ATCC 17699 / DSM 428 / KCTC 22496 / NCIMB 10442 / H16 / Stanier 337</strain>
    </source>
</reference>
<organism>
    <name type="scientific">Cupriavidus necator (strain ATCC 17699 / DSM 428 / KCTC 22496 / NCIMB 10442 / H16 / Stanier 337)</name>
    <name type="common">Ralstonia eutropha</name>
    <dbReference type="NCBI Taxonomy" id="381666"/>
    <lineage>
        <taxon>Bacteria</taxon>
        <taxon>Pseudomonadati</taxon>
        <taxon>Pseudomonadota</taxon>
        <taxon>Betaproteobacteria</taxon>
        <taxon>Burkholderiales</taxon>
        <taxon>Burkholderiaceae</taxon>
        <taxon>Cupriavidus</taxon>
    </lineage>
</organism>
<accession>Q0K4N8</accession>